<sequence length="496" mass="56835">MPIFSTRVLTYLRCIFRLFIGLMLLLTLVGCDFYTPSSQLEQIRQRGEIRVGTIYGSTSYYQRDDLAQGFDYELAKSYADWLGVKLTIVPVYSIAELVELLEKGKLDLAAAAIVVTPERRALFRFGPGFYQVSPKLVYRYGSPKPKDIGDLKGSIVVPAGSTGEDLLRELAKEYPGLKWSTNRDADVEELLKQVADGKIDYTVVQDTVLARTQRYYPELTEGLTLSKNQTVAWAMTKLPDDSLYASIIDFFGQRFMDGAIAKLDEKYFGHVQNFDFVDTRTFLQRAKSLLPKYQDLFKTHARMVDWRLLAAISYQESHWDPQARSYTGVRGMMMLTEPTAKAMGVKDRTHPAESIEGGARYLQHMMEKVPASVPTDEKVWFALTAYNIGYGHMMDARRLTKELGKNPDAWSDVKEVLPLLQQARWHRKVRYGYARGGEARNYVNNVRQYYQSLLWLDNEQQKAHRREELDEDDSSEPQSTERPTVIAEVVKQITLR</sequence>
<accession>A4SNZ5</accession>
<proteinExistence type="inferred from homology"/>
<name>MLTF_AERS4</name>
<protein>
    <recommendedName>
        <fullName evidence="1">Membrane-bound lytic murein transglycosylase F</fullName>
        <ecNumber evidence="1">4.2.2.n1</ecNumber>
    </recommendedName>
    <alternativeName>
        <fullName evidence="1">Murein lyase F</fullName>
    </alternativeName>
</protein>
<dbReference type="EC" id="4.2.2.n1" evidence="1"/>
<dbReference type="EMBL" id="CP000644">
    <property type="protein sequence ID" value="ABO90617.1"/>
    <property type="molecule type" value="Genomic_DNA"/>
</dbReference>
<dbReference type="RefSeq" id="WP_011898859.1">
    <property type="nucleotide sequence ID" value="NC_009348.1"/>
</dbReference>
<dbReference type="SMR" id="A4SNZ5"/>
<dbReference type="STRING" id="29491.GCA_000820065_00289"/>
<dbReference type="CAZy" id="GH23">
    <property type="family name" value="Glycoside Hydrolase Family 23"/>
</dbReference>
<dbReference type="KEGG" id="asa:ASA_2592"/>
<dbReference type="PATRIC" id="fig|382245.13.peg.2560"/>
<dbReference type="eggNOG" id="COG4623">
    <property type="taxonomic scope" value="Bacteria"/>
</dbReference>
<dbReference type="HOGENOM" id="CLU_027494_0_1_6"/>
<dbReference type="Proteomes" id="UP000000225">
    <property type="component" value="Chromosome"/>
</dbReference>
<dbReference type="GO" id="GO:0009279">
    <property type="term" value="C:cell outer membrane"/>
    <property type="evidence" value="ECO:0007669"/>
    <property type="project" value="UniProtKB-SubCell"/>
</dbReference>
<dbReference type="GO" id="GO:0008933">
    <property type="term" value="F:peptidoglycan lytic transglycosylase activity"/>
    <property type="evidence" value="ECO:0007669"/>
    <property type="project" value="UniProtKB-UniRule"/>
</dbReference>
<dbReference type="GO" id="GO:0016998">
    <property type="term" value="P:cell wall macromolecule catabolic process"/>
    <property type="evidence" value="ECO:0007669"/>
    <property type="project" value="UniProtKB-UniRule"/>
</dbReference>
<dbReference type="GO" id="GO:0071555">
    <property type="term" value="P:cell wall organization"/>
    <property type="evidence" value="ECO:0007669"/>
    <property type="project" value="UniProtKB-KW"/>
</dbReference>
<dbReference type="GO" id="GO:0009253">
    <property type="term" value="P:peptidoglycan catabolic process"/>
    <property type="evidence" value="ECO:0007669"/>
    <property type="project" value="TreeGrafter"/>
</dbReference>
<dbReference type="CDD" id="cd13403">
    <property type="entry name" value="MLTF-like"/>
    <property type="match status" value="1"/>
</dbReference>
<dbReference type="CDD" id="cd01009">
    <property type="entry name" value="PBP2_YfhD_N"/>
    <property type="match status" value="1"/>
</dbReference>
<dbReference type="FunFam" id="1.10.530.10:FF:000003">
    <property type="entry name" value="Membrane-bound lytic murein transglycosylase F"/>
    <property type="match status" value="1"/>
</dbReference>
<dbReference type="Gene3D" id="1.10.530.10">
    <property type="match status" value="1"/>
</dbReference>
<dbReference type="Gene3D" id="3.40.190.10">
    <property type="entry name" value="Periplasmic binding protein-like II"/>
    <property type="match status" value="2"/>
</dbReference>
<dbReference type="HAMAP" id="MF_02016">
    <property type="entry name" value="MltF"/>
    <property type="match status" value="1"/>
</dbReference>
<dbReference type="InterPro" id="IPR023346">
    <property type="entry name" value="Lysozyme-like_dom_sf"/>
</dbReference>
<dbReference type="InterPro" id="IPR023703">
    <property type="entry name" value="MltF"/>
</dbReference>
<dbReference type="InterPro" id="IPR001638">
    <property type="entry name" value="Solute-binding_3/MltF_N"/>
</dbReference>
<dbReference type="InterPro" id="IPR000189">
    <property type="entry name" value="Transglyc_AS"/>
</dbReference>
<dbReference type="InterPro" id="IPR008258">
    <property type="entry name" value="Transglycosylase_SLT_dom_1"/>
</dbReference>
<dbReference type="NCBIfam" id="NF008112">
    <property type="entry name" value="PRK10859.1"/>
    <property type="match status" value="1"/>
</dbReference>
<dbReference type="PANTHER" id="PTHR35936">
    <property type="entry name" value="MEMBRANE-BOUND LYTIC MUREIN TRANSGLYCOSYLASE F"/>
    <property type="match status" value="1"/>
</dbReference>
<dbReference type="PANTHER" id="PTHR35936:SF32">
    <property type="entry name" value="MEMBRANE-BOUND LYTIC MUREIN TRANSGLYCOSYLASE F"/>
    <property type="match status" value="1"/>
</dbReference>
<dbReference type="Pfam" id="PF00497">
    <property type="entry name" value="SBP_bac_3"/>
    <property type="match status" value="1"/>
</dbReference>
<dbReference type="Pfam" id="PF01464">
    <property type="entry name" value="SLT"/>
    <property type="match status" value="1"/>
</dbReference>
<dbReference type="SMART" id="SM00062">
    <property type="entry name" value="PBPb"/>
    <property type="match status" value="1"/>
</dbReference>
<dbReference type="SUPFAM" id="SSF53955">
    <property type="entry name" value="Lysozyme-like"/>
    <property type="match status" value="1"/>
</dbReference>
<dbReference type="SUPFAM" id="SSF53850">
    <property type="entry name" value="Periplasmic binding protein-like II"/>
    <property type="match status" value="1"/>
</dbReference>
<dbReference type="PROSITE" id="PS51257">
    <property type="entry name" value="PROKAR_LIPOPROTEIN"/>
    <property type="match status" value="1"/>
</dbReference>
<dbReference type="PROSITE" id="PS00922">
    <property type="entry name" value="TRANSGLYCOSYLASE"/>
    <property type="match status" value="1"/>
</dbReference>
<evidence type="ECO:0000255" key="1">
    <source>
        <dbReference type="HAMAP-Rule" id="MF_02016"/>
    </source>
</evidence>
<evidence type="ECO:0000256" key="2">
    <source>
        <dbReference type="SAM" id="MobiDB-lite"/>
    </source>
</evidence>
<comment type="function">
    <text evidence="1">Murein-degrading enzyme that degrades murein glycan strands and insoluble, high-molecular weight murein sacculi, with the concomitant formation of a 1,6-anhydromuramoyl product. Lytic transglycosylases (LTs) play an integral role in the metabolism of the peptidoglycan (PG) sacculus. Their lytic action creates space within the PG sacculus to allow for its expansion as well as for the insertion of various structures such as secretion systems and flagella.</text>
</comment>
<comment type="catalytic activity">
    <reaction evidence="1">
        <text>Exolytic cleavage of the (1-&gt;4)-beta-glycosidic linkage between N-acetylmuramic acid (MurNAc) and N-acetylglucosamine (GlcNAc) residues in peptidoglycan, from either the reducing or the non-reducing ends of the peptidoglycan chains, with concomitant formation of a 1,6-anhydrobond in the MurNAc residue.</text>
        <dbReference type="EC" id="4.2.2.n1"/>
    </reaction>
</comment>
<comment type="subcellular location">
    <subcellularLocation>
        <location>Cell outer membrane</location>
        <topology>Peripheral membrane protein</topology>
    </subcellularLocation>
    <text evidence="1">Attached to the inner leaflet of the outer membrane.</text>
</comment>
<comment type="domain">
    <text evidence="1">The N-terminal domain does not have lytic activity and probably modulates enzymatic activity. The C-terminal domain is the catalytic active domain.</text>
</comment>
<comment type="similarity">
    <text evidence="1">In the N-terminal section; belongs to the bacterial solute-binding protein 3 family.</text>
</comment>
<comment type="similarity">
    <text evidence="1">In the C-terminal section; belongs to the transglycosylase Slt family.</text>
</comment>
<organism>
    <name type="scientific">Aeromonas salmonicida (strain A449)</name>
    <dbReference type="NCBI Taxonomy" id="382245"/>
    <lineage>
        <taxon>Bacteria</taxon>
        <taxon>Pseudomonadati</taxon>
        <taxon>Pseudomonadota</taxon>
        <taxon>Gammaproteobacteria</taxon>
        <taxon>Aeromonadales</taxon>
        <taxon>Aeromonadaceae</taxon>
        <taxon>Aeromonas</taxon>
    </lineage>
</organism>
<keyword id="KW-0998">Cell outer membrane</keyword>
<keyword id="KW-0961">Cell wall biogenesis/degradation</keyword>
<keyword id="KW-0456">Lyase</keyword>
<keyword id="KW-0472">Membrane</keyword>
<keyword id="KW-0732">Signal</keyword>
<reference key="1">
    <citation type="journal article" date="2008" name="BMC Genomics">
        <title>The genome of Aeromonas salmonicida subsp. salmonicida A449: insights into the evolution of a fish pathogen.</title>
        <authorList>
            <person name="Reith M.E."/>
            <person name="Singh R.K."/>
            <person name="Curtis B."/>
            <person name="Boyd J.M."/>
            <person name="Bouevitch A."/>
            <person name="Kimball J."/>
            <person name="Munholland J."/>
            <person name="Murphy C."/>
            <person name="Sarty D."/>
            <person name="Williams J."/>
            <person name="Nash J.H."/>
            <person name="Johnson S.C."/>
            <person name="Brown L.L."/>
        </authorList>
    </citation>
    <scope>NUCLEOTIDE SEQUENCE [LARGE SCALE GENOMIC DNA]</scope>
    <source>
        <strain>A449</strain>
    </source>
</reference>
<gene>
    <name evidence="1" type="primary">mltF</name>
    <name type="ordered locus">ASA_2592</name>
</gene>
<feature type="signal peptide" evidence="1">
    <location>
        <begin position="1"/>
        <end position="31"/>
    </location>
</feature>
<feature type="chain" id="PRO_0000353918" description="Membrane-bound lytic murein transglycosylase F">
    <location>
        <begin position="32"/>
        <end position="496"/>
    </location>
</feature>
<feature type="region of interest" description="Non-LT domain" evidence="1">
    <location>
        <begin position="32"/>
        <end position="271"/>
    </location>
</feature>
<feature type="region of interest" description="LT domain" evidence="1">
    <location>
        <begin position="273"/>
        <end position="496"/>
    </location>
</feature>
<feature type="region of interest" description="Disordered" evidence="2">
    <location>
        <begin position="464"/>
        <end position="485"/>
    </location>
</feature>
<feature type="active site" evidence="1">
    <location>
        <position position="316"/>
    </location>
</feature>